<dbReference type="EC" id="2.6.1.9" evidence="1"/>
<dbReference type="EMBL" id="CP000089">
    <property type="protein sequence ID" value="AAZ48112.1"/>
    <property type="molecule type" value="Genomic_DNA"/>
</dbReference>
<dbReference type="SMR" id="Q47AL9"/>
<dbReference type="STRING" id="159087.Daro_3383"/>
<dbReference type="KEGG" id="dar:Daro_3383"/>
<dbReference type="eggNOG" id="COG0079">
    <property type="taxonomic scope" value="Bacteria"/>
</dbReference>
<dbReference type="HOGENOM" id="CLU_017584_3_0_4"/>
<dbReference type="OrthoDB" id="9809616at2"/>
<dbReference type="UniPathway" id="UPA00031">
    <property type="reaction ID" value="UER00012"/>
</dbReference>
<dbReference type="GO" id="GO:0004400">
    <property type="term" value="F:histidinol-phosphate transaminase activity"/>
    <property type="evidence" value="ECO:0007669"/>
    <property type="project" value="UniProtKB-UniRule"/>
</dbReference>
<dbReference type="GO" id="GO:0030170">
    <property type="term" value="F:pyridoxal phosphate binding"/>
    <property type="evidence" value="ECO:0007669"/>
    <property type="project" value="InterPro"/>
</dbReference>
<dbReference type="GO" id="GO:0000105">
    <property type="term" value="P:L-histidine biosynthetic process"/>
    <property type="evidence" value="ECO:0007669"/>
    <property type="project" value="UniProtKB-UniRule"/>
</dbReference>
<dbReference type="CDD" id="cd00609">
    <property type="entry name" value="AAT_like"/>
    <property type="match status" value="1"/>
</dbReference>
<dbReference type="Gene3D" id="3.90.1150.10">
    <property type="entry name" value="Aspartate Aminotransferase, domain 1"/>
    <property type="match status" value="1"/>
</dbReference>
<dbReference type="Gene3D" id="3.40.640.10">
    <property type="entry name" value="Type I PLP-dependent aspartate aminotransferase-like (Major domain)"/>
    <property type="match status" value="1"/>
</dbReference>
<dbReference type="HAMAP" id="MF_01023">
    <property type="entry name" value="HisC_aminotrans_2"/>
    <property type="match status" value="1"/>
</dbReference>
<dbReference type="InterPro" id="IPR001917">
    <property type="entry name" value="Aminotrans_II_pyridoxalP_BS"/>
</dbReference>
<dbReference type="InterPro" id="IPR004839">
    <property type="entry name" value="Aminotransferase_I/II_large"/>
</dbReference>
<dbReference type="InterPro" id="IPR005861">
    <property type="entry name" value="HisP_aminotrans"/>
</dbReference>
<dbReference type="InterPro" id="IPR015424">
    <property type="entry name" value="PyrdxlP-dep_Trfase"/>
</dbReference>
<dbReference type="InterPro" id="IPR015421">
    <property type="entry name" value="PyrdxlP-dep_Trfase_major"/>
</dbReference>
<dbReference type="InterPro" id="IPR015422">
    <property type="entry name" value="PyrdxlP-dep_Trfase_small"/>
</dbReference>
<dbReference type="NCBIfam" id="TIGR01141">
    <property type="entry name" value="hisC"/>
    <property type="match status" value="1"/>
</dbReference>
<dbReference type="PANTHER" id="PTHR42885:SF2">
    <property type="entry name" value="HISTIDINOL-PHOSPHATE AMINOTRANSFERASE"/>
    <property type="match status" value="1"/>
</dbReference>
<dbReference type="PANTHER" id="PTHR42885">
    <property type="entry name" value="HISTIDINOL-PHOSPHATE AMINOTRANSFERASE-RELATED"/>
    <property type="match status" value="1"/>
</dbReference>
<dbReference type="Pfam" id="PF00155">
    <property type="entry name" value="Aminotran_1_2"/>
    <property type="match status" value="1"/>
</dbReference>
<dbReference type="SUPFAM" id="SSF53383">
    <property type="entry name" value="PLP-dependent transferases"/>
    <property type="match status" value="1"/>
</dbReference>
<dbReference type="PROSITE" id="PS00599">
    <property type="entry name" value="AA_TRANSFER_CLASS_2"/>
    <property type="match status" value="1"/>
</dbReference>
<organism>
    <name type="scientific">Dechloromonas aromatica (strain RCB)</name>
    <dbReference type="NCBI Taxonomy" id="159087"/>
    <lineage>
        <taxon>Bacteria</taxon>
        <taxon>Pseudomonadati</taxon>
        <taxon>Pseudomonadota</taxon>
        <taxon>Betaproteobacteria</taxon>
        <taxon>Rhodocyclales</taxon>
        <taxon>Azonexaceae</taxon>
        <taxon>Dechloromonas</taxon>
    </lineage>
</organism>
<protein>
    <recommendedName>
        <fullName evidence="1">Histidinol-phosphate aminotransferase 2</fullName>
        <ecNumber evidence="1">2.6.1.9</ecNumber>
    </recommendedName>
    <alternativeName>
        <fullName evidence="1">Imidazole acetol-phosphate transaminase 2</fullName>
    </alternativeName>
</protein>
<accession>Q47AL9</accession>
<proteinExistence type="inferred from homology"/>
<keyword id="KW-0028">Amino-acid biosynthesis</keyword>
<keyword id="KW-0032">Aminotransferase</keyword>
<keyword id="KW-0368">Histidine biosynthesis</keyword>
<keyword id="KW-0663">Pyridoxal phosphate</keyword>
<keyword id="KW-0808">Transferase</keyword>
<name>HIS82_DECAR</name>
<reference key="1">
    <citation type="journal article" date="2009" name="BMC Genomics">
        <title>Metabolic analysis of the soil microbe Dechloromonas aromatica str. RCB: indications of a surprisingly complex life-style and cryptic anaerobic pathways for aromatic degradation.</title>
        <authorList>
            <person name="Salinero K.K."/>
            <person name="Keller K."/>
            <person name="Feil W.S."/>
            <person name="Feil H."/>
            <person name="Trong S."/>
            <person name="Di Bartolo G."/>
            <person name="Lapidus A."/>
        </authorList>
    </citation>
    <scope>NUCLEOTIDE SEQUENCE [LARGE SCALE GENOMIC DNA]</scope>
    <source>
        <strain>RCB</strain>
    </source>
</reference>
<feature type="chain" id="PRO_0000153353" description="Histidinol-phosphate aminotransferase 2">
    <location>
        <begin position="1"/>
        <end position="356"/>
    </location>
</feature>
<feature type="modified residue" description="N6-(pyridoxal phosphate)lysine" evidence="1">
    <location>
        <position position="214"/>
    </location>
</feature>
<evidence type="ECO:0000255" key="1">
    <source>
        <dbReference type="HAMAP-Rule" id="MF_01023"/>
    </source>
</evidence>
<sequence>MSRFWSQVVRDLTPYVPGEQPKIANLIKLNTNENPFPPSPRVVAAIQAELGDDAARLRLYPDPNADLLKAAVARRHTVSAQQVFVGNGSDEVLAHIFMALLKHDQPIIFPDITYSFYPVYCGLYGVEYQTLPLADDFSINPADYCDRPNGGIIFPNPNAPTGRLLPLDAIEQMLKANPDSVVVVDEAYVDFGGETAISLVDRYDNLLVVHTLSKSRSLAGMRVGFAVGHAALIEALERVKNSFNSYPLDRLAIVAAVAAMEDEAYFAQCCHAVMATRNTLTAELTELGFEVLPSTANFIFTRHPQRDAAELAKALRERNIIVRHFKLPRIDQFLRITVGTDGECKALTDALRQITG</sequence>
<gene>
    <name evidence="1" type="primary">hisC2</name>
    <name type="ordered locus">Daro_3383</name>
</gene>
<comment type="catalytic activity">
    <reaction evidence="1">
        <text>L-histidinol phosphate + 2-oxoglutarate = 3-(imidazol-4-yl)-2-oxopropyl phosphate + L-glutamate</text>
        <dbReference type="Rhea" id="RHEA:23744"/>
        <dbReference type="ChEBI" id="CHEBI:16810"/>
        <dbReference type="ChEBI" id="CHEBI:29985"/>
        <dbReference type="ChEBI" id="CHEBI:57766"/>
        <dbReference type="ChEBI" id="CHEBI:57980"/>
        <dbReference type="EC" id="2.6.1.9"/>
    </reaction>
</comment>
<comment type="cofactor">
    <cofactor evidence="1">
        <name>pyridoxal 5'-phosphate</name>
        <dbReference type="ChEBI" id="CHEBI:597326"/>
    </cofactor>
</comment>
<comment type="pathway">
    <text evidence="1">Amino-acid biosynthesis; L-histidine biosynthesis; L-histidine from 5-phospho-alpha-D-ribose 1-diphosphate: step 7/9.</text>
</comment>
<comment type="subunit">
    <text evidence="1">Homodimer.</text>
</comment>
<comment type="similarity">
    <text evidence="1">Belongs to the class-II pyridoxal-phosphate-dependent aminotransferase family. Histidinol-phosphate aminotransferase subfamily.</text>
</comment>